<organism>
    <name type="scientific">Burkholderia mallei (strain ATCC 23344)</name>
    <dbReference type="NCBI Taxonomy" id="243160"/>
    <lineage>
        <taxon>Bacteria</taxon>
        <taxon>Pseudomonadati</taxon>
        <taxon>Pseudomonadota</taxon>
        <taxon>Betaproteobacteria</taxon>
        <taxon>Burkholderiales</taxon>
        <taxon>Burkholderiaceae</taxon>
        <taxon>Burkholderia</taxon>
        <taxon>pseudomallei group</taxon>
    </lineage>
</organism>
<proteinExistence type="inferred from homology"/>
<reference key="1">
    <citation type="journal article" date="2004" name="Proc. Natl. Acad. Sci. U.S.A.">
        <title>Structural flexibility in the Burkholderia mallei genome.</title>
        <authorList>
            <person name="Nierman W.C."/>
            <person name="DeShazer D."/>
            <person name="Kim H.S."/>
            <person name="Tettelin H."/>
            <person name="Nelson K.E."/>
            <person name="Feldblyum T.V."/>
            <person name="Ulrich R.L."/>
            <person name="Ronning C.M."/>
            <person name="Brinkac L.M."/>
            <person name="Daugherty S.C."/>
            <person name="Davidsen T.D."/>
            <person name="DeBoy R.T."/>
            <person name="Dimitrov G."/>
            <person name="Dodson R.J."/>
            <person name="Durkin A.S."/>
            <person name="Gwinn M.L."/>
            <person name="Haft D.H."/>
            <person name="Khouri H.M."/>
            <person name="Kolonay J.F."/>
            <person name="Madupu R."/>
            <person name="Mohammoud Y."/>
            <person name="Nelson W.C."/>
            <person name="Radune D."/>
            <person name="Romero C.M."/>
            <person name="Sarria S."/>
            <person name="Selengut J."/>
            <person name="Shamblin C."/>
            <person name="Sullivan S.A."/>
            <person name="White O."/>
            <person name="Yu Y."/>
            <person name="Zafar N."/>
            <person name="Zhou L."/>
            <person name="Fraser C.M."/>
        </authorList>
    </citation>
    <scope>NUCLEOTIDE SEQUENCE [LARGE SCALE GENOMIC DNA]</scope>
    <source>
        <strain>ATCC 23344</strain>
    </source>
</reference>
<name>RSMA_BURMA</name>
<accession>Q62MM2</accession>
<protein>
    <recommendedName>
        <fullName evidence="1">Ribosomal RNA small subunit methyltransferase A</fullName>
        <ecNumber evidence="1">2.1.1.182</ecNumber>
    </recommendedName>
    <alternativeName>
        <fullName evidence="1">16S rRNA (adenine(1518)-N(6)/adenine(1519)-N(6))-dimethyltransferase</fullName>
    </alternativeName>
    <alternativeName>
        <fullName evidence="1">16S rRNA dimethyladenosine transferase</fullName>
    </alternativeName>
    <alternativeName>
        <fullName evidence="1">16S rRNA dimethylase</fullName>
    </alternativeName>
    <alternativeName>
        <fullName evidence="1">S-adenosylmethionine-6-N', N'-adenosyl(rRNA) dimethyltransferase</fullName>
    </alternativeName>
</protein>
<evidence type="ECO:0000255" key="1">
    <source>
        <dbReference type="HAMAP-Rule" id="MF_00607"/>
    </source>
</evidence>
<keyword id="KW-0963">Cytoplasm</keyword>
<keyword id="KW-0489">Methyltransferase</keyword>
<keyword id="KW-1185">Reference proteome</keyword>
<keyword id="KW-0694">RNA-binding</keyword>
<keyword id="KW-0698">rRNA processing</keyword>
<keyword id="KW-0949">S-adenosyl-L-methionine</keyword>
<keyword id="KW-0808">Transferase</keyword>
<dbReference type="EC" id="2.1.1.182" evidence="1"/>
<dbReference type="EMBL" id="CP000010">
    <property type="protein sequence ID" value="AAU49034.1"/>
    <property type="molecule type" value="Genomic_DNA"/>
</dbReference>
<dbReference type="RefSeq" id="WP_004189099.1">
    <property type="nucleotide sequence ID" value="NC_006348.1"/>
</dbReference>
<dbReference type="RefSeq" id="YP_102046.1">
    <property type="nucleotide sequence ID" value="NC_006348.1"/>
</dbReference>
<dbReference type="SMR" id="Q62MM2"/>
<dbReference type="GeneID" id="92977989"/>
<dbReference type="KEGG" id="bma:BMA0211"/>
<dbReference type="PATRIC" id="fig|243160.12.peg.211"/>
<dbReference type="eggNOG" id="COG0030">
    <property type="taxonomic scope" value="Bacteria"/>
</dbReference>
<dbReference type="HOGENOM" id="CLU_041220_0_1_4"/>
<dbReference type="Proteomes" id="UP000006693">
    <property type="component" value="Chromosome 1"/>
</dbReference>
<dbReference type="GO" id="GO:0005829">
    <property type="term" value="C:cytosol"/>
    <property type="evidence" value="ECO:0007669"/>
    <property type="project" value="TreeGrafter"/>
</dbReference>
<dbReference type="GO" id="GO:0052908">
    <property type="term" value="F:16S rRNA (adenine(1518)-N(6)/adenine(1519)-N(6))-dimethyltransferase activity"/>
    <property type="evidence" value="ECO:0007669"/>
    <property type="project" value="UniProtKB-EC"/>
</dbReference>
<dbReference type="GO" id="GO:0003723">
    <property type="term" value="F:RNA binding"/>
    <property type="evidence" value="ECO:0007669"/>
    <property type="project" value="UniProtKB-KW"/>
</dbReference>
<dbReference type="FunFam" id="1.10.8.100:FF:000001">
    <property type="entry name" value="Ribosomal RNA small subunit methyltransferase A"/>
    <property type="match status" value="1"/>
</dbReference>
<dbReference type="Gene3D" id="1.10.8.100">
    <property type="entry name" value="Ribosomal RNA adenine dimethylase-like, domain 2"/>
    <property type="match status" value="1"/>
</dbReference>
<dbReference type="Gene3D" id="3.40.50.150">
    <property type="entry name" value="Vaccinia Virus protein VP39"/>
    <property type="match status" value="1"/>
</dbReference>
<dbReference type="HAMAP" id="MF_00607">
    <property type="entry name" value="16SrRNA_methyltr_A"/>
    <property type="match status" value="1"/>
</dbReference>
<dbReference type="InterPro" id="IPR001737">
    <property type="entry name" value="KsgA/Erm"/>
</dbReference>
<dbReference type="InterPro" id="IPR023165">
    <property type="entry name" value="rRNA_Ade_diMease-like_C"/>
</dbReference>
<dbReference type="InterPro" id="IPR020598">
    <property type="entry name" value="rRNA_Ade_methylase_Trfase_N"/>
</dbReference>
<dbReference type="InterPro" id="IPR011530">
    <property type="entry name" value="rRNA_adenine_dimethylase"/>
</dbReference>
<dbReference type="InterPro" id="IPR029063">
    <property type="entry name" value="SAM-dependent_MTases_sf"/>
</dbReference>
<dbReference type="NCBIfam" id="TIGR00755">
    <property type="entry name" value="ksgA"/>
    <property type="match status" value="1"/>
</dbReference>
<dbReference type="PANTHER" id="PTHR11727">
    <property type="entry name" value="DIMETHYLADENOSINE TRANSFERASE"/>
    <property type="match status" value="1"/>
</dbReference>
<dbReference type="PANTHER" id="PTHR11727:SF7">
    <property type="entry name" value="DIMETHYLADENOSINE TRANSFERASE-RELATED"/>
    <property type="match status" value="1"/>
</dbReference>
<dbReference type="Pfam" id="PF00398">
    <property type="entry name" value="RrnaAD"/>
    <property type="match status" value="1"/>
</dbReference>
<dbReference type="SMART" id="SM00650">
    <property type="entry name" value="rADc"/>
    <property type="match status" value="1"/>
</dbReference>
<dbReference type="SUPFAM" id="SSF53335">
    <property type="entry name" value="S-adenosyl-L-methionine-dependent methyltransferases"/>
    <property type="match status" value="1"/>
</dbReference>
<dbReference type="PROSITE" id="PS51689">
    <property type="entry name" value="SAM_RNA_A_N6_MT"/>
    <property type="match status" value="1"/>
</dbReference>
<gene>
    <name evidence="1" type="primary">rsmA</name>
    <name evidence="1" type="synonym">ksgA</name>
    <name type="ordered locus">BMA0211</name>
</gene>
<sequence>MSNSRQHQGHFARKRFGQNFLVDHGVIDAIVAAIRPERGERMVEIGPGLGALTGPVIARLATPGSPLHAVELDRDLIGRLEQRFGELLELHAGDALTFDFGSIARPGDEPSLRIIGNLPYNISSPLLFHLMSFAPVVIDQHFMLQNEVVERMVAEPGTKAFSRLSVMLQYRYVMDKLIDVPPESFQPPPKVDSAIVRMIPHAPHELPAVDPAVLGEVVTAAFSQRRKMLRNTLGGYRDLVDFDALGFDLARRAEDIGVDEYVRVAQAVASARASG</sequence>
<feature type="chain" id="PRO_0000101502" description="Ribosomal RNA small subunit methyltransferase A">
    <location>
        <begin position="1"/>
        <end position="275"/>
    </location>
</feature>
<feature type="binding site" evidence="1">
    <location>
        <position position="19"/>
    </location>
    <ligand>
        <name>S-adenosyl-L-methionine</name>
        <dbReference type="ChEBI" id="CHEBI:59789"/>
    </ligand>
</feature>
<feature type="binding site" evidence="1">
    <location>
        <position position="21"/>
    </location>
    <ligand>
        <name>S-adenosyl-L-methionine</name>
        <dbReference type="ChEBI" id="CHEBI:59789"/>
    </ligand>
</feature>
<feature type="binding site" evidence="1">
    <location>
        <position position="46"/>
    </location>
    <ligand>
        <name>S-adenosyl-L-methionine</name>
        <dbReference type="ChEBI" id="CHEBI:59789"/>
    </ligand>
</feature>
<feature type="binding site" evidence="1">
    <location>
        <position position="71"/>
    </location>
    <ligand>
        <name>S-adenosyl-L-methionine</name>
        <dbReference type="ChEBI" id="CHEBI:59789"/>
    </ligand>
</feature>
<feature type="binding site" evidence="1">
    <location>
        <position position="94"/>
    </location>
    <ligand>
        <name>S-adenosyl-L-methionine</name>
        <dbReference type="ChEBI" id="CHEBI:59789"/>
    </ligand>
</feature>
<feature type="binding site" evidence="1">
    <location>
        <position position="117"/>
    </location>
    <ligand>
        <name>S-adenosyl-L-methionine</name>
        <dbReference type="ChEBI" id="CHEBI:59789"/>
    </ligand>
</feature>
<comment type="function">
    <text evidence="1">Specifically dimethylates two adjacent adenosines (A1518 and A1519) in the loop of a conserved hairpin near the 3'-end of 16S rRNA in the 30S particle. May play a critical role in biogenesis of 30S subunits.</text>
</comment>
<comment type="catalytic activity">
    <reaction evidence="1">
        <text>adenosine(1518)/adenosine(1519) in 16S rRNA + 4 S-adenosyl-L-methionine = N(6)-dimethyladenosine(1518)/N(6)-dimethyladenosine(1519) in 16S rRNA + 4 S-adenosyl-L-homocysteine + 4 H(+)</text>
        <dbReference type="Rhea" id="RHEA:19609"/>
        <dbReference type="Rhea" id="RHEA-COMP:10232"/>
        <dbReference type="Rhea" id="RHEA-COMP:10233"/>
        <dbReference type="ChEBI" id="CHEBI:15378"/>
        <dbReference type="ChEBI" id="CHEBI:57856"/>
        <dbReference type="ChEBI" id="CHEBI:59789"/>
        <dbReference type="ChEBI" id="CHEBI:74411"/>
        <dbReference type="ChEBI" id="CHEBI:74493"/>
        <dbReference type="EC" id="2.1.1.182"/>
    </reaction>
</comment>
<comment type="subcellular location">
    <subcellularLocation>
        <location evidence="1">Cytoplasm</location>
    </subcellularLocation>
</comment>
<comment type="similarity">
    <text evidence="1">Belongs to the class I-like SAM-binding methyltransferase superfamily. rRNA adenine N(6)-methyltransferase family. RsmA subfamily.</text>
</comment>